<evidence type="ECO:0000255" key="1"/>
<evidence type="ECO:0000255" key="2">
    <source>
        <dbReference type="PROSITE-ProRule" id="PRU00446"/>
    </source>
</evidence>
<evidence type="ECO:0000269" key="3">
    <source>
    </source>
</evidence>
<evidence type="ECO:0000269" key="4">
    <source>
    </source>
</evidence>
<evidence type="ECO:0000269" key="5">
    <source>
    </source>
</evidence>
<evidence type="ECO:0000269" key="6">
    <source>
    </source>
</evidence>
<evidence type="ECO:0000269" key="7">
    <source>
    </source>
</evidence>
<evidence type="ECO:0000305" key="8"/>
<dbReference type="EMBL" id="AY358567">
    <property type="protein sequence ID" value="AAQ88930.1"/>
    <property type="molecule type" value="mRNA"/>
</dbReference>
<dbReference type="EMBL" id="AL390736">
    <property type="status" value="NOT_ANNOTATED_CDS"/>
    <property type="molecule type" value="Genomic_DNA"/>
</dbReference>
<dbReference type="EMBL" id="CH471124">
    <property type="protein sequence ID" value="EAW52052.1"/>
    <property type="molecule type" value="Genomic_DNA"/>
</dbReference>
<dbReference type="EMBL" id="BC047740">
    <property type="protein sequence ID" value="AAH47740.1"/>
    <property type="molecule type" value="mRNA"/>
</dbReference>
<dbReference type="EMBL" id="BC117329">
    <property type="protein sequence ID" value="AAI17330.1"/>
    <property type="molecule type" value="mRNA"/>
</dbReference>
<dbReference type="EMBL" id="AF097021">
    <property type="protein sequence ID" value="AAC72970.1"/>
    <property type="status" value="ALT_SEQ"/>
    <property type="molecule type" value="mRNA"/>
</dbReference>
<dbReference type="CCDS" id="CCDS9440.1"/>
<dbReference type="RefSeq" id="NP_006409.3">
    <property type="nucleotide sequence ID" value="NM_006418.4"/>
</dbReference>
<dbReference type="SMR" id="Q6UX06"/>
<dbReference type="BioGRID" id="115813">
    <property type="interactions" value="78"/>
</dbReference>
<dbReference type="DIP" id="DIP-59533N"/>
<dbReference type="FunCoup" id="Q6UX06">
    <property type="interactions" value="10"/>
</dbReference>
<dbReference type="IntAct" id="Q6UX06">
    <property type="interactions" value="61"/>
</dbReference>
<dbReference type="MINT" id="Q6UX06"/>
<dbReference type="STRING" id="9606.ENSP00000219022"/>
<dbReference type="GlyConnect" id="1585">
    <property type="glycosylation" value="12 N-Linked glycans (6 sites)"/>
</dbReference>
<dbReference type="GlyCosmos" id="Q6UX06">
    <property type="glycosylation" value="6 sites, 11 glycans"/>
</dbReference>
<dbReference type="GlyGen" id="Q6UX06">
    <property type="glycosylation" value="9 sites, 56 N-linked glycans (6 sites)"/>
</dbReference>
<dbReference type="iPTMnet" id="Q6UX06"/>
<dbReference type="PhosphoSitePlus" id="Q6UX06"/>
<dbReference type="BioMuta" id="OLFM4"/>
<dbReference type="DMDM" id="74749412"/>
<dbReference type="CPTAC" id="CPTAC-1528"/>
<dbReference type="CPTAC" id="CPTAC-1529"/>
<dbReference type="jPOST" id="Q6UX06"/>
<dbReference type="MassIVE" id="Q6UX06"/>
<dbReference type="PaxDb" id="9606-ENSP00000219022"/>
<dbReference type="PeptideAtlas" id="Q6UX06"/>
<dbReference type="PRIDE" id="Q6UX06"/>
<dbReference type="ProteomicsDB" id="67547"/>
<dbReference type="Pumba" id="Q6UX06"/>
<dbReference type="Antibodypedia" id="24251">
    <property type="antibodies" value="246 antibodies from 32 providers"/>
</dbReference>
<dbReference type="DNASU" id="10562"/>
<dbReference type="Ensembl" id="ENST00000219022.3">
    <property type="protein sequence ID" value="ENSP00000219022.2"/>
    <property type="gene ID" value="ENSG00000102837.7"/>
</dbReference>
<dbReference type="GeneID" id="10562"/>
<dbReference type="KEGG" id="hsa:10562"/>
<dbReference type="MANE-Select" id="ENST00000219022.3">
    <property type="protein sequence ID" value="ENSP00000219022.2"/>
    <property type="RefSeq nucleotide sequence ID" value="NM_006418.5"/>
    <property type="RefSeq protein sequence ID" value="NP_006409.3"/>
</dbReference>
<dbReference type="UCSC" id="uc001vhl.4">
    <property type="organism name" value="human"/>
</dbReference>
<dbReference type="AGR" id="HGNC:17190"/>
<dbReference type="CTD" id="10562"/>
<dbReference type="DisGeNET" id="10562"/>
<dbReference type="GeneCards" id="OLFM4"/>
<dbReference type="HGNC" id="HGNC:17190">
    <property type="gene designation" value="OLFM4"/>
</dbReference>
<dbReference type="HPA" id="ENSG00000102837">
    <property type="expression patterns" value="Tissue enhanced (intestine, pancreas)"/>
</dbReference>
<dbReference type="MIM" id="614061">
    <property type="type" value="gene"/>
</dbReference>
<dbReference type="neXtProt" id="NX_Q6UX06"/>
<dbReference type="OpenTargets" id="ENSG00000102837"/>
<dbReference type="PharmGKB" id="PA134984745"/>
<dbReference type="VEuPathDB" id="HostDB:ENSG00000102837"/>
<dbReference type="eggNOG" id="KOG3545">
    <property type="taxonomic scope" value="Eukaryota"/>
</dbReference>
<dbReference type="GeneTree" id="ENSGT00940000155454"/>
<dbReference type="HOGENOM" id="CLU_035236_5_0_1"/>
<dbReference type="InParanoid" id="Q6UX06"/>
<dbReference type="OMA" id="LRITYGQ"/>
<dbReference type="OrthoDB" id="8626508at2759"/>
<dbReference type="PAN-GO" id="Q6UX06">
    <property type="GO annotations" value="2 GO annotations based on evolutionary models"/>
</dbReference>
<dbReference type="PhylomeDB" id="Q6UX06"/>
<dbReference type="TreeFam" id="TF315964"/>
<dbReference type="PathwayCommons" id="Q6UX06"/>
<dbReference type="Reactome" id="R-HSA-6798695">
    <property type="pathway name" value="Neutrophil degranulation"/>
</dbReference>
<dbReference type="SignaLink" id="Q6UX06"/>
<dbReference type="BioGRID-ORCS" id="10562">
    <property type="hits" value="14 hits in 1146 CRISPR screens"/>
</dbReference>
<dbReference type="ChiTaRS" id="OLFM4">
    <property type="organism name" value="human"/>
</dbReference>
<dbReference type="GenomeRNAi" id="10562"/>
<dbReference type="Pharos" id="Q6UX06">
    <property type="development level" value="Tbio"/>
</dbReference>
<dbReference type="PRO" id="PR:Q6UX06"/>
<dbReference type="Proteomes" id="UP000005640">
    <property type="component" value="Chromosome 13"/>
</dbReference>
<dbReference type="RNAct" id="Q6UX06">
    <property type="molecule type" value="protein"/>
</dbReference>
<dbReference type="Bgee" id="ENSG00000102837">
    <property type="expression patterns" value="Expressed in urethra and 123 other cell types or tissues"/>
</dbReference>
<dbReference type="ExpressionAtlas" id="Q6UX06">
    <property type="expression patterns" value="baseline and differential"/>
</dbReference>
<dbReference type="GO" id="GO:0005829">
    <property type="term" value="C:cytosol"/>
    <property type="evidence" value="ECO:0000314"/>
    <property type="project" value="HPA"/>
</dbReference>
<dbReference type="GO" id="GO:0070062">
    <property type="term" value="C:extracellular exosome"/>
    <property type="evidence" value="ECO:0007005"/>
    <property type="project" value="UniProtKB"/>
</dbReference>
<dbReference type="GO" id="GO:0005576">
    <property type="term" value="C:extracellular region"/>
    <property type="evidence" value="ECO:0000304"/>
    <property type="project" value="Reactome"/>
</dbReference>
<dbReference type="GO" id="GO:0005615">
    <property type="term" value="C:extracellular space"/>
    <property type="evidence" value="ECO:0000314"/>
    <property type="project" value="UniProtKB"/>
</dbReference>
<dbReference type="GO" id="GO:0045171">
    <property type="term" value="C:intercellular bridge"/>
    <property type="evidence" value="ECO:0000314"/>
    <property type="project" value="HPA"/>
</dbReference>
<dbReference type="GO" id="GO:0005739">
    <property type="term" value="C:mitochondrion"/>
    <property type="evidence" value="ECO:0007669"/>
    <property type="project" value="UniProtKB-SubCell"/>
</dbReference>
<dbReference type="GO" id="GO:0005654">
    <property type="term" value="C:nucleoplasm"/>
    <property type="evidence" value="ECO:0000314"/>
    <property type="project" value="HPA"/>
</dbReference>
<dbReference type="GO" id="GO:0048471">
    <property type="term" value="C:perinuclear region of cytoplasm"/>
    <property type="evidence" value="ECO:0000314"/>
    <property type="project" value="UniProtKB"/>
</dbReference>
<dbReference type="GO" id="GO:0005886">
    <property type="term" value="C:plasma membrane"/>
    <property type="evidence" value="ECO:0000314"/>
    <property type="project" value="UniProtKB"/>
</dbReference>
<dbReference type="GO" id="GO:0032991">
    <property type="term" value="C:protein-containing complex"/>
    <property type="evidence" value="ECO:0000315"/>
    <property type="project" value="UniProtKB"/>
</dbReference>
<dbReference type="GO" id="GO:0042581">
    <property type="term" value="C:specific granule"/>
    <property type="evidence" value="ECO:0000314"/>
    <property type="project" value="UniProtKB"/>
</dbReference>
<dbReference type="GO" id="GO:0035580">
    <property type="term" value="C:specific granule lumen"/>
    <property type="evidence" value="ECO:0000304"/>
    <property type="project" value="Reactome"/>
</dbReference>
<dbReference type="GO" id="GO:1904724">
    <property type="term" value="C:tertiary granule lumen"/>
    <property type="evidence" value="ECO:0000304"/>
    <property type="project" value="Reactome"/>
</dbReference>
<dbReference type="GO" id="GO:0045296">
    <property type="term" value="F:cadherin binding"/>
    <property type="evidence" value="ECO:0000315"/>
    <property type="project" value="UniProtKB"/>
</dbReference>
<dbReference type="GO" id="GO:0005198">
    <property type="term" value="F:structural molecule activity"/>
    <property type="evidence" value="ECO:0000314"/>
    <property type="project" value="UniProtKB"/>
</dbReference>
<dbReference type="GO" id="GO:0007155">
    <property type="term" value="P:cell adhesion"/>
    <property type="evidence" value="ECO:0007669"/>
    <property type="project" value="UniProtKB-KW"/>
</dbReference>
<dbReference type="GO" id="GO:0006955">
    <property type="term" value="P:immune response"/>
    <property type="evidence" value="ECO:0007669"/>
    <property type="project" value="Ensembl"/>
</dbReference>
<dbReference type="GO" id="GO:0043124">
    <property type="term" value="P:negative regulation of canonical NF-kappaB signal transduction"/>
    <property type="evidence" value="ECO:0007669"/>
    <property type="project" value="Ensembl"/>
</dbReference>
<dbReference type="GO" id="GO:0050777">
    <property type="term" value="P:negative regulation of immune response"/>
    <property type="evidence" value="ECO:0007669"/>
    <property type="project" value="Ensembl"/>
</dbReference>
<dbReference type="GO" id="GO:1900026">
    <property type="term" value="P:positive regulation of substrate adhesion-dependent cell spreading"/>
    <property type="evidence" value="ECO:0000314"/>
    <property type="project" value="UniProtKB"/>
</dbReference>
<dbReference type="GO" id="GO:0007165">
    <property type="term" value="P:signal transduction"/>
    <property type="evidence" value="ECO:0000318"/>
    <property type="project" value="GO_Central"/>
</dbReference>
<dbReference type="InterPro" id="IPR003112">
    <property type="entry name" value="Olfac-like_dom"/>
</dbReference>
<dbReference type="InterPro" id="IPR050605">
    <property type="entry name" value="Olfactomedin-like_domain"/>
</dbReference>
<dbReference type="InterPro" id="IPR011041">
    <property type="entry name" value="Quinoprot_gluc/sorb_DH_b-prop"/>
</dbReference>
<dbReference type="PANTHER" id="PTHR23192:SF7">
    <property type="entry name" value="OLFACTOMEDIN-4"/>
    <property type="match status" value="1"/>
</dbReference>
<dbReference type="PANTHER" id="PTHR23192">
    <property type="entry name" value="OLFACTOMEDIN-RELATED"/>
    <property type="match status" value="1"/>
</dbReference>
<dbReference type="Pfam" id="PF02191">
    <property type="entry name" value="OLF"/>
    <property type="match status" value="1"/>
</dbReference>
<dbReference type="SMART" id="SM00284">
    <property type="entry name" value="OLF"/>
    <property type="match status" value="1"/>
</dbReference>
<dbReference type="SUPFAM" id="SSF50952">
    <property type="entry name" value="Soluble quinoprotein glucose dehydrogenase"/>
    <property type="match status" value="1"/>
</dbReference>
<dbReference type="PROSITE" id="PS51132">
    <property type="entry name" value="OLF"/>
    <property type="match status" value="1"/>
</dbReference>
<name>OLFM4_HUMAN</name>
<proteinExistence type="evidence at protein level"/>
<comment type="function">
    <text evidence="5 6 7">May promote proliferation of pancreatic cancer cells by favoring the transition from the S to G2/M phase. In myeloid leukemic cell lines, inhibits cell growth and induces cell differentiation and apoptosis. May play a role in the inhibition of EIF4EBP1 phosphorylation/deactivation. Facilitates cell adhesion, most probably through interaction with cell surface lectins and cadherin.</text>
</comment>
<comment type="subunit">
    <text evidence="4 5">Homomultimer; disulfide-linked. Interacts with NDUFA13. Interacts with cell surface lectins (locutions ricinus communis agglutinin I, concanavalin-A and wheat germ agglutinin) and cadherin.</text>
</comment>
<comment type="interaction">
    <interactant intactId="EBI-2804156">
        <id>Q6UX06</id>
    </interactant>
    <interactant intactId="EBI-12701138">
        <id>P41181</id>
        <label>AQP2</label>
    </interactant>
    <organismsDiffer>false</organismsDiffer>
    <experiments>3</experiments>
</comment>
<comment type="interaction">
    <interactant intactId="EBI-2804156">
        <id>Q6UX06</id>
    </interactant>
    <interactant intactId="EBI-2808854">
        <id>Q92482</id>
        <label>AQP3</label>
    </interactant>
    <organismsDiffer>false</organismsDiffer>
    <experiments>3</experiments>
</comment>
<comment type="interaction">
    <interactant intactId="EBI-2804156">
        <id>Q6UX06</id>
    </interactant>
    <interactant intactId="EBI-11532900">
        <id>J3KQ12</id>
        <label>BSCL2</label>
    </interactant>
    <organismsDiffer>false</organismsDiffer>
    <experiments>3</experiments>
</comment>
<comment type="interaction">
    <interactant intactId="EBI-2804156">
        <id>Q6UX06</id>
    </interactant>
    <interactant intactId="EBI-740744">
        <id>O95471</id>
        <label>CLDN7</label>
    </interactant>
    <organismsDiffer>false</organismsDiffer>
    <experiments>3</experiments>
</comment>
<comment type="interaction">
    <interactant intactId="EBI-2804156">
        <id>Q6UX06</id>
    </interactant>
    <interactant intactId="EBI-11977093">
        <id>Q6ZS10</id>
        <label>CLEC17A</label>
    </interactant>
    <organismsDiffer>false</organismsDiffer>
    <experiments>3</experiments>
</comment>
<comment type="interaction">
    <interactant intactId="EBI-2804156">
        <id>Q6UX06</id>
    </interactant>
    <interactant intactId="EBI-11989440">
        <id>Q9BXN2-6</id>
        <label>CLEC7A</label>
    </interactant>
    <organismsDiffer>false</organismsDiffer>
    <experiments>3</experiments>
</comment>
<comment type="interaction">
    <interactant intactId="EBI-2804156">
        <id>Q6UX06</id>
    </interactant>
    <interactant intactId="EBI-11291074">
        <id>Q9BQT9</id>
        <label>CLSTN3</label>
    </interactant>
    <organismsDiffer>false</organismsDiffer>
    <experiments>3</experiments>
</comment>
<comment type="interaction">
    <interactant intactId="EBI-2804156">
        <id>Q6UX06</id>
    </interactant>
    <interactant intactId="EBI-3924906">
        <id>Q9HBJ8</id>
        <label>CLTRN</label>
    </interactant>
    <organismsDiffer>false</organismsDiffer>
    <experiments>3</experiments>
</comment>
<comment type="interaction">
    <interactant intactId="EBI-2804156">
        <id>Q6UX06</id>
    </interactant>
    <interactant intactId="EBI-6942903">
        <id>Q96BA8</id>
        <label>CREB3L1</label>
    </interactant>
    <organismsDiffer>false</organismsDiffer>
    <experiments>3</experiments>
</comment>
<comment type="interaction">
    <interactant intactId="EBI-2804156">
        <id>Q6UX06</id>
    </interactant>
    <interactant intactId="EBI-17272224">
        <id>O14944</id>
        <label>EREG</label>
    </interactant>
    <organismsDiffer>false</organismsDiffer>
    <experiments>3</experiments>
</comment>
<comment type="interaction">
    <interactant intactId="EBI-2804156">
        <id>Q6UX06</id>
    </interactant>
    <interactant intactId="EBI-18304435">
        <id>Q5JX71</id>
        <label>FAM209A</label>
    </interactant>
    <organismsDiffer>false</organismsDiffer>
    <experiments>3</experiments>
</comment>
<comment type="interaction">
    <interactant intactId="EBI-2804156">
        <id>Q6UX06</id>
    </interactant>
    <interactant intactId="EBI-12142257">
        <id>Q8TBE3</id>
        <label>FNDC9</label>
    </interactant>
    <organismsDiffer>false</organismsDiffer>
    <experiments>3</experiments>
</comment>
<comment type="interaction">
    <interactant intactId="EBI-2804156">
        <id>Q6UX06</id>
    </interactant>
    <interactant intactId="EBI-13638581">
        <id>Q14626</id>
        <label>IL11RA</label>
    </interactant>
    <organismsDiffer>false</organismsDiffer>
    <experiments>3</experiments>
</comment>
<comment type="interaction">
    <interactant intactId="EBI-2804156">
        <id>Q6UX06</id>
    </interactant>
    <interactant intactId="EBI-12811565">
        <id>Q9NQX7-3</id>
        <label>ITM2C</label>
    </interactant>
    <organismsDiffer>false</organismsDiffer>
    <experiments>3</experiments>
</comment>
<comment type="interaction">
    <interactant intactId="EBI-2804156">
        <id>Q6UX06</id>
    </interactant>
    <interactant intactId="EBI-749265">
        <id>Q8N6L0</id>
        <label>KASH5</label>
    </interactant>
    <organismsDiffer>false</organismsDiffer>
    <experiments>3</experiments>
</comment>
<comment type="interaction">
    <interactant intactId="EBI-2804156">
        <id>Q6UX06</id>
    </interactant>
    <interactant intactId="EBI-8632435">
        <id>P43628</id>
        <label>KIR2DL3</label>
    </interactant>
    <organismsDiffer>false</organismsDiffer>
    <experiments>3</experiments>
</comment>
<comment type="interaction">
    <interactant intactId="EBI-2804156">
        <id>Q6UX06</id>
    </interactant>
    <interactant intactId="EBI-17272405">
        <id>Q8N743</id>
        <label>KIR3DL3</label>
    </interactant>
    <organismsDiffer>false</organismsDiffer>
    <experiments>3</experiments>
</comment>
<comment type="interaction">
    <interactant intactId="EBI-2804156">
        <id>Q6UX06</id>
    </interactant>
    <interactant intactId="EBI-10173166">
        <id>Q5T700</id>
        <label>LDLRAD1</label>
    </interactant>
    <organismsDiffer>false</organismsDiffer>
    <experiments>7</experiments>
</comment>
<comment type="interaction">
    <interactant intactId="EBI-2804156">
        <id>Q6UX06</id>
    </interactant>
    <interactant intactId="EBI-17490413">
        <id>A8MZ59</id>
        <label>LEUTX</label>
    </interactant>
    <organismsDiffer>false</organismsDiffer>
    <experiments>3</experiments>
</comment>
<comment type="interaction">
    <interactant intactId="EBI-2804156">
        <id>Q6UX06</id>
    </interactant>
    <interactant intactId="EBI-17566767">
        <id>Q6ZUX7</id>
        <label>LHFPL2</label>
    </interactant>
    <organismsDiffer>false</organismsDiffer>
    <experiments>3</experiments>
</comment>
<comment type="interaction">
    <interactant intactId="EBI-2804156">
        <id>Q6UX06</id>
    </interactant>
    <interactant intactId="EBI-1051262">
        <id>Q9Y239</id>
        <label>NOD1</label>
    </interactant>
    <organismsDiffer>false</organismsDiffer>
    <experiments>2</experiments>
</comment>
<comment type="interaction">
    <interactant intactId="EBI-2804156">
        <id>Q6UX06</id>
    </interactant>
    <interactant intactId="EBI-7445625">
        <id>Q9HC29</id>
        <label>NOD2</label>
    </interactant>
    <organismsDiffer>false</organismsDiffer>
    <experiments>2</experiments>
</comment>
<comment type="interaction">
    <interactant intactId="EBI-2804156">
        <id>Q6UX06</id>
    </interactant>
    <interactant intactId="EBI-3919694">
        <id>P15151</id>
        <label>PVR</label>
    </interactant>
    <organismsDiffer>false</organismsDiffer>
    <experiments>3</experiments>
</comment>
<comment type="interaction">
    <interactant intactId="EBI-2804156">
        <id>Q6UX06</id>
    </interactant>
    <interactant intactId="EBI-17964309">
        <id>Q6DKI7</id>
        <label>PVRIG</label>
    </interactant>
    <organismsDiffer>false</organismsDiffer>
    <experiments>3</experiments>
</comment>
<comment type="interaction">
    <interactant intactId="EBI-2804156">
        <id>Q6UX06</id>
    </interactant>
    <interactant intactId="EBI-13336719">
        <id>Q9NXS2-3</id>
        <label>QPCTL</label>
    </interactant>
    <organismsDiffer>false</organismsDiffer>
    <experiments>3</experiments>
</comment>
<comment type="interaction">
    <interactant intactId="EBI-2804156">
        <id>Q6UX06</id>
    </interactant>
    <interactant intactId="EBI-17595455">
        <id>P54219-3</id>
        <label>SLC18A1</label>
    </interactant>
    <organismsDiffer>false</organismsDiffer>
    <experiments>3</experiments>
</comment>
<comment type="interaction">
    <interactant intactId="EBI-2804156">
        <id>Q6UX06</id>
    </interactant>
    <interactant intactId="EBI-12081840">
        <id>A1A5C7-2</id>
        <label>SLC22A23</label>
    </interactant>
    <organismsDiffer>false</organismsDiffer>
    <experiments>3</experiments>
</comment>
<comment type="interaction">
    <interactant intactId="EBI-2804156">
        <id>Q6UX06</id>
    </interactant>
    <interactant intactId="EBI-18194029">
        <id>Q96L08</id>
        <label>SUSD3</label>
    </interactant>
    <organismsDiffer>false</organismsDiffer>
    <experiments>3</experiments>
</comment>
<comment type="interaction">
    <interactant intactId="EBI-2804156">
        <id>Q6UX06</id>
    </interactant>
    <interactant intactId="EBI-7131783">
        <id>Q8N205</id>
        <label>SYNE4</label>
    </interactant>
    <organismsDiffer>false</organismsDiffer>
    <experiments>3</experiments>
</comment>
<comment type="interaction">
    <interactant intactId="EBI-2804156">
        <id>Q6UX06</id>
    </interactant>
    <interactant intactId="EBI-3934135">
        <id>Q9UP52</id>
        <label>TFR2</label>
    </interactant>
    <organismsDiffer>false</organismsDiffer>
    <experiments>3</experiments>
</comment>
<comment type="interaction">
    <interactant intactId="EBI-2804156">
        <id>Q6UX06</id>
    </interactant>
    <interactant intactId="EBI-19763514">
        <id>Q8N3G9</id>
        <label>TMEM130</label>
    </interactant>
    <organismsDiffer>false</organismsDiffer>
    <experiments>3</experiments>
</comment>
<comment type="interaction">
    <interactant intactId="EBI-2804156">
        <id>Q6UX06</id>
    </interactant>
    <interactant intactId="EBI-7404021">
        <id>O14788</id>
        <label>TNFSF11</label>
    </interactant>
    <organismsDiffer>false</organismsDiffer>
    <experiments>3</experiments>
</comment>
<comment type="interaction">
    <interactant intactId="EBI-2804156">
        <id>Q6UX06</id>
    </interactant>
    <interactant intactId="EBI-524131">
        <id>O43557</id>
        <label>TNFSF14</label>
    </interactant>
    <organismsDiffer>false</organismsDiffer>
    <experiments>3</experiments>
</comment>
<comment type="interaction">
    <interactant intactId="EBI-2804156">
        <id>Q6UX06</id>
    </interactant>
    <interactant intactId="EBI-17670824">
        <id>Q8WUV1</id>
        <label>TSPAN18</label>
    </interactant>
    <organismsDiffer>false</organismsDiffer>
    <experiments>3</experiments>
</comment>
<comment type="subcellular location">
    <subcellularLocation>
        <location>Secreted</location>
        <location>Extracellular space</location>
    </subcellularLocation>
    <subcellularLocation>
        <location>Mitochondrion</location>
    </subcellularLocation>
    <text evidence="4 5 7">Subcellular location is not clearly defined: has been shown to be secreted (PubMed:16566923), but also in the mitochondrion (PubMed:15059901, PubMed:20724538), cytoplasm and plasma membrane (PubMed:20724538) and in the nucleus (PubMed:15059901).</text>
</comment>
<comment type="tissue specificity">
    <text evidence="3 5 6 7">Expressed during myeloid lineage development. Much higher expression in bone marrow neutrophils than in peripheral blood neutrophils (at protein level). Strongly expressed in the prostate, small intestine and colon and moderately expressed in the bone marrow and stomach. Overexpressed in some pancreatic cancer tissues.</text>
</comment>
<comment type="developmental stage">
    <text evidence="6">Elevated expression during the early S phase of the cell cycle, followed by a gradual decrease during late S phase.</text>
</comment>
<comment type="induction">
    <text evidence="7">By retinoic acid. This induction requires functional NFKB pathway.</text>
</comment>
<comment type="domain">
    <text evidence="5">The olfactomedin-like domain is involved in the interaction with cadherin.</text>
</comment>
<comment type="PTM">
    <text>N-glycosylated.</text>
</comment>
<comment type="sequence caution" evidence="8">
    <conflict type="erroneous initiation">
        <sequence resource="EMBL-CDS" id="AAC72970"/>
    </conflict>
    <text>Truncated N-terminus.</text>
</comment>
<comment type="sequence caution" evidence="8">
    <conflict type="frameshift">
        <sequence resource="EMBL-CDS" id="AAC72970"/>
    </conflict>
</comment>
<comment type="online information" name="Atlas of Genetics and Cytogenetics in Oncology and Haematology">
    <link uri="https://atlasgeneticsoncology.org/gene/49730/OLFM4"/>
</comment>
<sequence length="510" mass="57280">MRPGLSFLLALLFFLGQAAGDLGDVGPPIPSPGFSSFPGVDSSSSFSSSSRSGSSSSRSLGSGGSVSQLFSNFTGSVDDRGTCQCSVSLPDTTFPVDRVERLEFTAHVLSQKFEKELSKVREYVQLISVYEKKLLNLTVRIDIMEKDTISYTELDFELIKVEVKEMEKLVIQLKESFGGSSEIVDQLEVEIRNMTLLVEKLETLDKNNVLAIRREIVALKTKLKECEASKDQNTPVVHPPPTPGSCGHGGVVNISKPSVVQLNWRGFSYLYGAWGRDYSPQHPNKGLYWVAPLNTDGRLLEYYRLYNTLDDLLLYINARELRITYGQGSGTAVYNNNMYVNMYNTGNIARVNLTTNTIAVTQTLPNAAYNNRFSYANVAWQDIDFAVDENGLWVIYSTEASTGNMVISKLNDTTLQVLNTWYTKQYKPSASNAFMVCGVLYATRTMNTRTEEIFYYYDTNTGKEGKLDIVMHKMQEKVQSINYNPFDQKLYVYNDGYLLNYDLSVLQKPQ</sequence>
<accession>Q6UX06</accession>
<accession>O95362</accession>
<accession>Q5VWG0</accession>
<accession>Q86T22</accession>
<keyword id="KW-0130">Cell adhesion</keyword>
<keyword id="KW-0175">Coiled coil</keyword>
<keyword id="KW-1015">Disulfide bond</keyword>
<keyword id="KW-0325">Glycoprotein</keyword>
<keyword id="KW-0496">Mitochondrion</keyword>
<keyword id="KW-1267">Proteomics identification</keyword>
<keyword id="KW-1185">Reference proteome</keyword>
<keyword id="KW-0964">Secreted</keyword>
<keyword id="KW-0732">Signal</keyword>
<feature type="signal peptide" evidence="1">
    <location>
        <begin position="1"/>
        <end position="20"/>
    </location>
</feature>
<feature type="chain" id="PRO_0000311398" description="Olfactomedin-4">
    <location>
        <begin position="21"/>
        <end position="510"/>
    </location>
</feature>
<feature type="domain" description="Olfactomedin-like" evidence="2">
    <location>
        <begin position="245"/>
        <end position="507"/>
    </location>
</feature>
<feature type="coiled-coil region" evidence="1">
    <location>
        <begin position="155"/>
        <end position="234"/>
    </location>
</feature>
<feature type="glycosylation site" description="N-linked (GlcNAc...) asparagine" evidence="1">
    <location>
        <position position="72"/>
    </location>
</feature>
<feature type="glycosylation site" description="N-linked (GlcNAc...) asparagine" evidence="1">
    <location>
        <position position="136"/>
    </location>
</feature>
<feature type="glycosylation site" description="N-linked (GlcNAc...) asparagine" evidence="1">
    <location>
        <position position="253"/>
    </location>
</feature>
<feature type="disulfide bond" evidence="2">
    <location>
        <begin position="246"/>
        <end position="437"/>
    </location>
</feature>
<feature type="sequence variant" id="VAR_037246" description="In dbSNP:rs35790097.">
    <original>S</original>
    <variation>P</variation>
    <location>
        <position position="36"/>
    </location>
</feature>
<feature type="mutagenesis site" description="Abolishes secretion. No effect on multimer formation." evidence="5">
    <original>C</original>
    <variation>A</variation>
    <location>
        <position position="83"/>
    </location>
</feature>
<feature type="mutagenesis site" description="Abolishes secretion. No effect on multimer formation." evidence="5">
    <original>C</original>
    <variation>A</variation>
    <location>
        <position position="85"/>
    </location>
</feature>
<feature type="mutagenesis site" description="No effect on secretion. Affects multimer formation." evidence="5">
    <original>C</original>
    <variation>A</variation>
    <location>
        <position position="226"/>
    </location>
</feature>
<feature type="mutagenesis site" description="Abolishes secretion. No effect on multimer formation." evidence="5">
    <original>C</original>
    <variation>A</variation>
    <location>
        <position position="246"/>
    </location>
</feature>
<feature type="mutagenesis site" description="Abolishes secretion. No effect on multimer formation." evidence="5">
    <original>C</original>
    <variation>A</variation>
    <location>
        <position position="437"/>
    </location>
</feature>
<feature type="sequence conflict" description="In Ref. 5; AAC72970." evidence="8" ref="5">
    <original>V</original>
    <variation>L</variation>
    <location>
        <position position="129"/>
    </location>
</feature>
<feature type="sequence conflict" description="In Ref. 5; AAC72970." evidence="8" ref="5">
    <original>R</original>
    <variation>I</variation>
    <location>
        <position position="304"/>
    </location>
</feature>
<organism>
    <name type="scientific">Homo sapiens</name>
    <name type="common">Human</name>
    <dbReference type="NCBI Taxonomy" id="9606"/>
    <lineage>
        <taxon>Eukaryota</taxon>
        <taxon>Metazoa</taxon>
        <taxon>Chordata</taxon>
        <taxon>Craniata</taxon>
        <taxon>Vertebrata</taxon>
        <taxon>Euteleostomi</taxon>
        <taxon>Mammalia</taxon>
        <taxon>Eutheria</taxon>
        <taxon>Euarchontoglires</taxon>
        <taxon>Primates</taxon>
        <taxon>Haplorrhini</taxon>
        <taxon>Catarrhini</taxon>
        <taxon>Hominidae</taxon>
        <taxon>Homo</taxon>
    </lineage>
</organism>
<reference key="1">
    <citation type="journal article" date="2003" name="Genome Res.">
        <title>The secreted protein discovery initiative (SPDI), a large-scale effort to identify novel human secreted and transmembrane proteins: a bioinformatics assessment.</title>
        <authorList>
            <person name="Clark H.F."/>
            <person name="Gurney A.L."/>
            <person name="Abaya E."/>
            <person name="Baker K."/>
            <person name="Baldwin D.T."/>
            <person name="Brush J."/>
            <person name="Chen J."/>
            <person name="Chow B."/>
            <person name="Chui C."/>
            <person name="Crowley C."/>
            <person name="Currell B."/>
            <person name="Deuel B."/>
            <person name="Dowd P."/>
            <person name="Eaton D."/>
            <person name="Foster J.S."/>
            <person name="Grimaldi C."/>
            <person name="Gu Q."/>
            <person name="Hass P.E."/>
            <person name="Heldens S."/>
            <person name="Huang A."/>
            <person name="Kim H.S."/>
            <person name="Klimowski L."/>
            <person name="Jin Y."/>
            <person name="Johnson S."/>
            <person name="Lee J."/>
            <person name="Lewis L."/>
            <person name="Liao D."/>
            <person name="Mark M.R."/>
            <person name="Robbie E."/>
            <person name="Sanchez C."/>
            <person name="Schoenfeld J."/>
            <person name="Seshagiri S."/>
            <person name="Simmons L."/>
            <person name="Singh J."/>
            <person name="Smith V."/>
            <person name="Stinson J."/>
            <person name="Vagts A."/>
            <person name="Vandlen R.L."/>
            <person name="Watanabe C."/>
            <person name="Wieand D."/>
            <person name="Woods K."/>
            <person name="Xie M.-H."/>
            <person name="Yansura D.G."/>
            <person name="Yi S."/>
            <person name="Yu G."/>
            <person name="Yuan J."/>
            <person name="Zhang M."/>
            <person name="Zhang Z."/>
            <person name="Goddard A.D."/>
            <person name="Wood W.I."/>
            <person name="Godowski P.J."/>
            <person name="Gray A.M."/>
        </authorList>
    </citation>
    <scope>NUCLEOTIDE SEQUENCE [LARGE SCALE MRNA]</scope>
</reference>
<reference key="2">
    <citation type="journal article" date="2004" name="Nature">
        <title>The DNA sequence and analysis of human chromosome 13.</title>
        <authorList>
            <person name="Dunham A."/>
            <person name="Matthews L.H."/>
            <person name="Burton J."/>
            <person name="Ashurst J.L."/>
            <person name="Howe K.L."/>
            <person name="Ashcroft K.J."/>
            <person name="Beare D.M."/>
            <person name="Burford D.C."/>
            <person name="Hunt S.E."/>
            <person name="Griffiths-Jones S."/>
            <person name="Jones M.C."/>
            <person name="Keenan S.J."/>
            <person name="Oliver K."/>
            <person name="Scott C.E."/>
            <person name="Ainscough R."/>
            <person name="Almeida J.P."/>
            <person name="Ambrose K.D."/>
            <person name="Andrews D.T."/>
            <person name="Ashwell R.I.S."/>
            <person name="Babbage A.K."/>
            <person name="Bagguley C.L."/>
            <person name="Bailey J."/>
            <person name="Bannerjee R."/>
            <person name="Barlow K.F."/>
            <person name="Bates K."/>
            <person name="Beasley H."/>
            <person name="Bird C.P."/>
            <person name="Bray-Allen S."/>
            <person name="Brown A.J."/>
            <person name="Brown J.Y."/>
            <person name="Burrill W."/>
            <person name="Carder C."/>
            <person name="Carter N.P."/>
            <person name="Chapman J.C."/>
            <person name="Clamp M.E."/>
            <person name="Clark S.Y."/>
            <person name="Clarke G."/>
            <person name="Clee C.M."/>
            <person name="Clegg S.C."/>
            <person name="Cobley V."/>
            <person name="Collins J.E."/>
            <person name="Corby N."/>
            <person name="Coville G.J."/>
            <person name="Deloukas P."/>
            <person name="Dhami P."/>
            <person name="Dunham I."/>
            <person name="Dunn M."/>
            <person name="Earthrowl M.E."/>
            <person name="Ellington A.G."/>
            <person name="Faulkner L."/>
            <person name="Frankish A.G."/>
            <person name="Frankland J."/>
            <person name="French L."/>
            <person name="Garner P."/>
            <person name="Garnett J."/>
            <person name="Gilbert J.G.R."/>
            <person name="Gilson C.J."/>
            <person name="Ghori J."/>
            <person name="Grafham D.V."/>
            <person name="Gribble S.M."/>
            <person name="Griffiths C."/>
            <person name="Hall R.E."/>
            <person name="Hammond S."/>
            <person name="Harley J.L."/>
            <person name="Hart E.A."/>
            <person name="Heath P.D."/>
            <person name="Howden P.J."/>
            <person name="Huckle E.J."/>
            <person name="Hunt P.J."/>
            <person name="Hunt A.R."/>
            <person name="Johnson C."/>
            <person name="Johnson D."/>
            <person name="Kay M."/>
            <person name="Kimberley A.M."/>
            <person name="King A."/>
            <person name="Laird G.K."/>
            <person name="Langford C.J."/>
            <person name="Lawlor S."/>
            <person name="Leongamornlert D.A."/>
            <person name="Lloyd D.M."/>
            <person name="Lloyd C."/>
            <person name="Loveland J.E."/>
            <person name="Lovell J."/>
            <person name="Martin S."/>
            <person name="Mashreghi-Mohammadi M."/>
            <person name="McLaren S.J."/>
            <person name="McMurray A."/>
            <person name="Milne S."/>
            <person name="Moore M.J.F."/>
            <person name="Nickerson T."/>
            <person name="Palmer S.A."/>
            <person name="Pearce A.V."/>
            <person name="Peck A.I."/>
            <person name="Pelan S."/>
            <person name="Phillimore B."/>
            <person name="Porter K.M."/>
            <person name="Rice C.M."/>
            <person name="Searle S."/>
            <person name="Sehra H.K."/>
            <person name="Shownkeen R."/>
            <person name="Skuce C.D."/>
            <person name="Smith M."/>
            <person name="Steward C.A."/>
            <person name="Sycamore N."/>
            <person name="Tester J."/>
            <person name="Thomas D.W."/>
            <person name="Tracey A."/>
            <person name="Tromans A."/>
            <person name="Tubby B."/>
            <person name="Wall M."/>
            <person name="Wallis J.M."/>
            <person name="West A.P."/>
            <person name="Whitehead S.L."/>
            <person name="Willey D.L."/>
            <person name="Wilming L."/>
            <person name="Wray P.W."/>
            <person name="Wright M.W."/>
            <person name="Young L."/>
            <person name="Coulson A."/>
            <person name="Durbin R.M."/>
            <person name="Hubbard T."/>
            <person name="Sulston J.E."/>
            <person name="Beck S."/>
            <person name="Bentley D.R."/>
            <person name="Rogers J."/>
            <person name="Ross M.T."/>
        </authorList>
    </citation>
    <scope>NUCLEOTIDE SEQUENCE [LARGE SCALE GENOMIC DNA]</scope>
</reference>
<reference key="3">
    <citation type="submission" date="2005-07" db="EMBL/GenBank/DDBJ databases">
        <authorList>
            <person name="Mural R.J."/>
            <person name="Istrail S."/>
            <person name="Sutton G.G."/>
            <person name="Florea L."/>
            <person name="Halpern A.L."/>
            <person name="Mobarry C.M."/>
            <person name="Lippert R."/>
            <person name="Walenz B."/>
            <person name="Shatkay H."/>
            <person name="Dew I."/>
            <person name="Miller J.R."/>
            <person name="Flanigan M.J."/>
            <person name="Edwards N.J."/>
            <person name="Bolanos R."/>
            <person name="Fasulo D."/>
            <person name="Halldorsson B.V."/>
            <person name="Hannenhalli S."/>
            <person name="Turner R."/>
            <person name="Yooseph S."/>
            <person name="Lu F."/>
            <person name="Nusskern D.R."/>
            <person name="Shue B.C."/>
            <person name="Zheng X.H."/>
            <person name="Zhong F."/>
            <person name="Delcher A.L."/>
            <person name="Huson D.H."/>
            <person name="Kravitz S.A."/>
            <person name="Mouchard L."/>
            <person name="Reinert K."/>
            <person name="Remington K.A."/>
            <person name="Clark A.G."/>
            <person name="Waterman M.S."/>
            <person name="Eichler E.E."/>
            <person name="Adams M.D."/>
            <person name="Hunkapiller M.W."/>
            <person name="Myers E.W."/>
            <person name="Venter J.C."/>
        </authorList>
    </citation>
    <scope>NUCLEOTIDE SEQUENCE [LARGE SCALE GENOMIC DNA]</scope>
</reference>
<reference key="4">
    <citation type="journal article" date="2004" name="Genome Res.">
        <title>The status, quality, and expansion of the NIH full-length cDNA project: the Mammalian Gene Collection (MGC).</title>
        <authorList>
            <consortium name="The MGC Project Team"/>
        </authorList>
    </citation>
    <scope>NUCLEOTIDE SEQUENCE [LARGE SCALE MRNA]</scope>
    <source>
        <tissue>Colon</tissue>
        <tissue>PNS</tissue>
    </source>
</reference>
<reference key="5">
    <citation type="journal article" date="2002" name="Gene">
        <title>Identification and characterization of a novel member of olfactomedin-related protein family, hGC-1, expressed during myeloid lineage development.</title>
        <authorList>
            <person name="Zhang J."/>
            <person name="Liu W.-L."/>
            <person name="Tang D.C."/>
            <person name="Chen L."/>
            <person name="Wang M."/>
            <person name="Pack S.D."/>
            <person name="Zhuang Z."/>
            <person name="Rodgers G.P."/>
        </authorList>
    </citation>
    <scope>NUCLEOTIDE SEQUENCE [MRNA] OF 4-510</scope>
    <scope>TISSUE SPECIFICITY</scope>
    <scope>PTM</scope>
</reference>
<reference key="6">
    <citation type="journal article" date="2004" name="Cancer Res.">
        <title>GW112, a novel antiapoptotic protein that promotes tumor growth.</title>
        <authorList>
            <person name="Zhang X."/>
            <person name="Huang Q."/>
            <person name="Yang Z."/>
            <person name="Li Y."/>
            <person name="Li C.-Y."/>
        </authorList>
    </citation>
    <scope>SUBCELLULAR LOCATION</scope>
    <scope>INTERACTION WITH NDUFA13</scope>
</reference>
<reference key="7">
    <citation type="journal article" date="2006" name="Exp. Cell Res.">
        <title>The glycoprotein hGC-1 binds to cadherin and lectins.</title>
        <authorList>
            <person name="Liu W."/>
            <person name="Chen L."/>
            <person name="Zhu J."/>
            <person name="Rodgers G.P."/>
        </authorList>
    </citation>
    <scope>FUNCTION</scope>
    <scope>TISSUE SPECIFICITY</scope>
    <scope>SUBCELLULAR LOCATION</scope>
    <scope>DOMAIN</scope>
    <scope>SUBUNIT</scope>
    <scope>INTERACTION WITH CELL SURFACE LECTINS AND CADHERIN</scope>
    <scope>MUTAGENESIS OF CYS-83; CYS-85; CYS-226; CYS-246 AND CYS-437</scope>
</reference>
<reference key="8">
    <citation type="journal article" date="2007" name="Cancer Sci.">
        <title>Olfactomedin 4 promotes S-phase transition in proliferation of pancreatic cancer cells.</title>
        <authorList>
            <person name="Kobayashi D."/>
            <person name="Koshida S."/>
            <person name="Moriai R."/>
            <person name="Tsuji N."/>
            <person name="Watanabe N."/>
        </authorList>
    </citation>
    <scope>FUNCTION</scope>
    <scope>TISSUE SPECIFICITY</scope>
    <scope>DEVELOPMENTAL STAGE</scope>
</reference>
<reference key="9">
    <citation type="journal article" date="2010" name="Blood">
        <title>Olfactomedin 4 is a novel target gene of retinoic acids and 5-aza-2'-deoxycytidine involved in human myeloid leukemia cell growth, differentiation, and apoptosis.</title>
        <authorList>
            <person name="Liu W."/>
            <person name="Lee H.W."/>
            <person name="Liu Y."/>
            <person name="Wang R."/>
            <person name="Rodgers G.P."/>
        </authorList>
    </citation>
    <scope>FUNCTION</scope>
    <scope>SUBCELLULAR LOCATION</scope>
    <scope>TISSUE SPECIFICITY</scope>
    <scope>INDUCTION</scope>
</reference>
<gene>
    <name type="primary">OLFM4</name>
    <name type="synonym">GW112</name>
    <name type="ORF">UNQ362/PRO698</name>
</gene>
<protein>
    <recommendedName>
        <fullName>Olfactomedin-4</fullName>
        <shortName>OLM4</shortName>
    </recommendedName>
    <alternativeName>
        <fullName>Antiapoptotic protein GW112</fullName>
    </alternativeName>
    <alternativeName>
        <fullName>G-CSF-stimulated clone 1 protein</fullName>
        <shortName>hGC-1</shortName>
    </alternativeName>
    <alternativeName>
        <fullName>hOLfD</fullName>
    </alternativeName>
</protein>